<proteinExistence type="predicted"/>
<accession>P03978</accession>
<name>TVC2_MOUSE</name>
<sequence>MLLLRWPTFCCLWVFGLGQLEQTELSVTRETDESAQISCIVSLPYFSNTAIHWYRQKAKKFEYLIYVSTNYNQRPLGGKNKKIEASKDFQTSTSTLKINYLKKEDEATYYCAVWI</sequence>
<organism>
    <name type="scientific">Mus musculus</name>
    <name type="common">Mouse</name>
    <dbReference type="NCBI Taxonomy" id="10090"/>
    <lineage>
        <taxon>Eukaryota</taxon>
        <taxon>Metazoa</taxon>
        <taxon>Chordata</taxon>
        <taxon>Craniata</taxon>
        <taxon>Vertebrata</taxon>
        <taxon>Euteleostomi</taxon>
        <taxon>Mammalia</taxon>
        <taxon>Eutheria</taxon>
        <taxon>Euarchontoglires</taxon>
        <taxon>Glires</taxon>
        <taxon>Rodentia</taxon>
        <taxon>Myomorpha</taxon>
        <taxon>Muroidea</taxon>
        <taxon>Muridae</taxon>
        <taxon>Murinae</taxon>
        <taxon>Mus</taxon>
        <taxon>Mus</taxon>
    </lineage>
</organism>
<keyword id="KW-1064">Adaptive immunity</keyword>
<keyword id="KW-0391">Immunity</keyword>
<keyword id="KW-0393">Immunoglobulin domain</keyword>
<keyword id="KW-0675">Receptor</keyword>
<keyword id="KW-1185">Reference proteome</keyword>
<keyword id="KW-0732">Signal</keyword>
<keyword id="KW-1279">T cell receptor</keyword>
<reference key="1">
    <citation type="journal article" date="1985" name="Cell">
        <title>Structure, organization, and somatic rearrangement of T cell gamma genes.</title>
        <authorList>
            <person name="Hayday A.C."/>
            <person name="Saito H."/>
            <person name="Gillies S.D."/>
            <person name="Kranz D.M."/>
            <person name="Tanigawa G."/>
            <person name="Eisen H.N."/>
            <person name="Tonegawa S."/>
        </authorList>
    </citation>
    <scope>NUCLEOTIDE SEQUENCE [GENOMIC DNA]</scope>
</reference>
<reference key="2">
    <citation type="journal article" date="1989" name="Nature">
        <title>Limited receptor repertoire in a mycobacteria-reactive subset of gamma delta T lymphocytes.</title>
        <authorList>
            <person name="Happ M.P."/>
            <person name="Kubo R.T."/>
            <person name="Palmer E."/>
            <person name="Born W.K."/>
            <person name="O'Brien R.L."/>
        </authorList>
    </citation>
    <scope>NUCLEOTIDE SEQUENCE [GENOMIC DNA] OF 31-114</scope>
</reference>
<dbReference type="EMBL" id="M12832">
    <property type="protein sequence ID" value="AAA40307.1"/>
    <property type="molecule type" value="Genomic_DNA"/>
</dbReference>
<dbReference type="PIR" id="A02020">
    <property type="entry name" value="RWMSVB"/>
</dbReference>
<dbReference type="SMR" id="P03978"/>
<dbReference type="Ensembl" id="ENSMUST00000103564.3">
    <property type="protein sequence ID" value="ENSMUSP00000100342.2"/>
    <property type="gene ID" value="ENSMUSG00000076755.3"/>
</dbReference>
<dbReference type="UCSC" id="uc007pox.1">
    <property type="organism name" value="mouse"/>
</dbReference>
<dbReference type="AGR" id="MGI:98631"/>
<dbReference type="MGI" id="MGI:98631">
    <property type="gene designation" value="Tcrg-V1"/>
</dbReference>
<dbReference type="VEuPathDB" id="HostDB:ENSMUSG00000076755"/>
<dbReference type="GeneTree" id="ENSGT00940000153143"/>
<dbReference type="HOGENOM" id="CLU_077975_7_0_1"/>
<dbReference type="OrthoDB" id="9616010at2759"/>
<dbReference type="PhylomeDB" id="P03978"/>
<dbReference type="TreeFam" id="TF352063"/>
<dbReference type="Proteomes" id="UP000000589">
    <property type="component" value="Chromosome 13"/>
</dbReference>
<dbReference type="Bgee" id="ENSMUSG00000076755">
    <property type="expression patterns" value="Expressed in thymus and 16 other cell types or tissues"/>
</dbReference>
<dbReference type="ExpressionAtlas" id="P03978">
    <property type="expression patterns" value="baseline and differential"/>
</dbReference>
<dbReference type="GO" id="GO:0042101">
    <property type="term" value="C:T cell receptor complex"/>
    <property type="evidence" value="ECO:0007669"/>
    <property type="project" value="UniProtKB-KW"/>
</dbReference>
<dbReference type="GO" id="GO:0002250">
    <property type="term" value="P:adaptive immune response"/>
    <property type="evidence" value="ECO:0007669"/>
    <property type="project" value="UniProtKB-KW"/>
</dbReference>
<dbReference type="FunFam" id="2.60.40.10:FF:001649">
    <property type="entry name" value="T cell receptor gamma, variable 3"/>
    <property type="match status" value="1"/>
</dbReference>
<dbReference type="Gene3D" id="2.60.40.10">
    <property type="entry name" value="Immunoglobulins"/>
    <property type="match status" value="1"/>
</dbReference>
<dbReference type="InterPro" id="IPR007110">
    <property type="entry name" value="Ig-like_dom"/>
</dbReference>
<dbReference type="InterPro" id="IPR036179">
    <property type="entry name" value="Ig-like_dom_sf"/>
</dbReference>
<dbReference type="InterPro" id="IPR013783">
    <property type="entry name" value="Ig-like_fold"/>
</dbReference>
<dbReference type="InterPro" id="IPR013106">
    <property type="entry name" value="Ig_V-set"/>
</dbReference>
<dbReference type="InterPro" id="IPR051117">
    <property type="entry name" value="TRG_var/const_region"/>
</dbReference>
<dbReference type="PANTHER" id="PTHR19256:SF40">
    <property type="entry name" value="NON-FUNCTIONAL T CELL RECEPTOR GAMMA VARIABLE 10-RELATED"/>
    <property type="match status" value="1"/>
</dbReference>
<dbReference type="PANTHER" id="PTHR19256">
    <property type="entry name" value="T-CELL RECEPTOR GAMMA CHAIN"/>
    <property type="match status" value="1"/>
</dbReference>
<dbReference type="Pfam" id="PF07686">
    <property type="entry name" value="V-set"/>
    <property type="match status" value="1"/>
</dbReference>
<dbReference type="SMART" id="SM00406">
    <property type="entry name" value="IGv"/>
    <property type="match status" value="1"/>
</dbReference>
<dbReference type="SUPFAM" id="SSF48726">
    <property type="entry name" value="Immunoglobulin"/>
    <property type="match status" value="1"/>
</dbReference>
<dbReference type="PROSITE" id="PS50835">
    <property type="entry name" value="IG_LIKE"/>
    <property type="match status" value="1"/>
</dbReference>
<protein>
    <recommendedName>
        <fullName>T-cell receptor gamma chain V region V108B</fullName>
    </recommendedName>
</protein>
<feature type="signal peptide">
    <location>
        <begin position="1"/>
        <end position="18"/>
    </location>
</feature>
<feature type="chain" id="PRO_0000033608" description="T-cell receptor gamma chain V region V108B">
    <location>
        <begin position="19"/>
        <end position="115" status="greater than"/>
    </location>
</feature>
<feature type="region of interest" description="V segment">
    <location>
        <begin position="19"/>
        <end position="115"/>
    </location>
</feature>
<feature type="non-terminal residue">
    <location>
        <position position="115"/>
    </location>
</feature>
<gene>
    <name type="primary">Tcrg-V1</name>
    <name type="synonym">Gm16602</name>
</gene>